<organism>
    <name type="scientific">Human adenovirus B serotype 3</name>
    <name type="common">HAdV-3</name>
    <name type="synonym">Human adenovirus 3</name>
    <dbReference type="NCBI Taxonomy" id="45659"/>
    <lineage>
        <taxon>Viruses</taxon>
        <taxon>Varidnaviria</taxon>
        <taxon>Bamfordvirae</taxon>
        <taxon>Preplasmiviricota</taxon>
        <taxon>Tectiliviricetes</taxon>
        <taxon>Rowavirales</taxon>
        <taxon>Adenoviridae</taxon>
        <taxon>Mastadenovirus</taxon>
        <taxon>Human mastadenovirus B</taxon>
    </lineage>
</organism>
<name>E3GL_ADE03</name>
<protein>
    <recommendedName>
        <fullName>Early E3 18.5 kDa glycoprotein</fullName>
    </recommendedName>
    <alternativeName>
        <fullName>E3-19K</fullName>
    </alternativeName>
    <alternativeName>
        <fullName>E3gp 19 kDa</fullName>
        <shortName>E19</shortName>
    </alternativeName>
    <alternativeName>
        <fullName>Early E3 19.2 kDa glycoprotein</fullName>
    </alternativeName>
    <alternativeName>
        <fullName>GP19K</fullName>
    </alternativeName>
</protein>
<organismHost>
    <name type="scientific">Homo sapiens</name>
    <name type="common">Human</name>
    <dbReference type="NCBI Taxonomy" id="9606"/>
</organismHost>
<comment type="function">
    <text evidence="1">Binds and retains class I heavy chains in the endoplasmic reticulum during the early period of virus infection, thereby impairing their transport to the cell surface. Also delays the expression of class I alleles that it cannot affect by direct retention. Binds transporters associated with antigen processing (TAP) and acts as a tapasin inhibitor, preventing class I/TAP association. In consequence, infected cells are masked for immune recognition by cytotoxic T-lymphocytes (By similarity).</text>
</comment>
<comment type="subcellular location">
    <subcellularLocation>
        <location>Host endoplasmic reticulum membrane</location>
        <topology>Single-pass type I membrane protein</topology>
    </subcellularLocation>
</comment>
<comment type="developmental stage">
    <text>Expressed at early period of virus infection.</text>
</comment>
<comment type="domain">
    <text>The lumenal domain binds directly to the peptide-binding domain of class I molecules.</text>
</comment>
<comment type="domain">
    <text evidence="1">The di-lysine motif confers endoplasmic reticulum localization for type I membrane proteins.</text>
</comment>
<comment type="PTM">
    <text evidence="1">Both disulfide bonds are absolutely critical for the interaction with MHC antigens.</text>
</comment>
<comment type="PTM">
    <text evidence="1">N-glycosylated; high-mannose.</text>
</comment>
<comment type="similarity">
    <text evidence="3">Belongs to the adenoviridae E19 family.</text>
</comment>
<evidence type="ECO:0000250" key="1"/>
<evidence type="ECO:0000255" key="2"/>
<evidence type="ECO:0000305" key="3"/>
<dbReference type="EMBL" id="M15952">
    <property type="protein sequence ID" value="AAA42483.1"/>
    <property type="molecule type" value="Genomic_DNA"/>
</dbReference>
<dbReference type="PIR" id="D29500">
    <property type="entry name" value="ERAD33"/>
</dbReference>
<dbReference type="SMR" id="P11323"/>
<dbReference type="GO" id="GO:0044167">
    <property type="term" value="C:host cell endoplasmic reticulum membrane"/>
    <property type="evidence" value="ECO:0007669"/>
    <property type="project" value="UniProtKB-SubCell"/>
</dbReference>
<dbReference type="GO" id="GO:0016020">
    <property type="term" value="C:membrane"/>
    <property type="evidence" value="ECO:0007669"/>
    <property type="project" value="UniProtKB-KW"/>
</dbReference>
<dbReference type="GO" id="GO:0005537">
    <property type="term" value="F:D-mannose binding"/>
    <property type="evidence" value="ECO:0007669"/>
    <property type="project" value="UniProtKB-KW"/>
</dbReference>
<dbReference type="GO" id="GO:0046776">
    <property type="term" value="P:symbiont-mediated suppression of host antigen processing and presentation of peptide antigen via MHC class I"/>
    <property type="evidence" value="ECO:0007669"/>
    <property type="project" value="UniProtKB-KW"/>
</dbReference>
<dbReference type="Gene3D" id="2.60.40.3530">
    <property type="match status" value="1"/>
</dbReference>
<dbReference type="InterPro" id="IPR006965">
    <property type="entry name" value="Adenovirus_Gp19K"/>
</dbReference>
<dbReference type="InterPro" id="IPR038710">
    <property type="entry name" value="Adenovirus_Gp19K_sf"/>
</dbReference>
<dbReference type="Pfam" id="PF04881">
    <property type="entry name" value="Adeno_GP19K"/>
    <property type="match status" value="1"/>
</dbReference>
<proteinExistence type="evidence at transcript level"/>
<sequence>MGAILVVLALLSLLGLGSANLNPLDHDPCLDFDPENCTLTFAPDTSRLCGVLIKCGWDCRSVEITHNNKTWNNTLSTTWEPGVPQWYTVSVRGPDGSIRISNNTFIFSEMCDLAMFMSRQYDLWPPSKENIVAFSIAYCLVTCIITAIICVCIHLLIVIRPRQSNEEKEKMP</sequence>
<keyword id="KW-1015">Disulfide bond</keyword>
<keyword id="KW-0244">Early protein</keyword>
<keyword id="KW-0325">Glycoprotein</keyword>
<keyword id="KW-1038">Host endoplasmic reticulum</keyword>
<keyword id="KW-1043">Host membrane</keyword>
<keyword id="KW-0945">Host-virus interaction</keyword>
<keyword id="KW-1080">Inhibition of host adaptive immune response by virus</keyword>
<keyword id="KW-1108">Inhibition of host tapasin by virus</keyword>
<keyword id="KW-0430">Lectin</keyword>
<keyword id="KW-0465">Mannose-binding</keyword>
<keyword id="KW-0472">Membrane</keyword>
<keyword id="KW-0732">Signal</keyword>
<keyword id="KW-0812">Transmembrane</keyword>
<keyword id="KW-1133">Transmembrane helix</keyword>
<keyword id="KW-0899">Viral immunoevasion</keyword>
<accession>P11323</accession>
<reference key="1">
    <citation type="journal article" date="1986" name="Gene">
        <title>Region E3 of human adenoviruses; differences between the oncogenic adenovirus-3 and the non-oncogenic adenovirus-2.</title>
        <authorList>
            <person name="Signaes C."/>
            <person name="Akusjaervi G."/>
            <person name="Pettersson U."/>
        </authorList>
    </citation>
    <scope>NUCLEOTIDE SEQUENCE [GENOMIC DNA]</scope>
</reference>
<feature type="signal peptide" evidence="2">
    <location>
        <begin position="1"/>
        <end position="19"/>
    </location>
</feature>
<feature type="chain" id="PRO_0000036483" description="Early E3 18.5 kDa glycoprotein">
    <location>
        <begin position="20"/>
        <end position="172"/>
    </location>
</feature>
<feature type="topological domain" description="Lumenal" evidence="2">
    <location>
        <begin position="20"/>
        <end position="136"/>
    </location>
</feature>
<feature type="transmembrane region" description="Helical" evidence="2">
    <location>
        <begin position="137"/>
        <end position="157"/>
    </location>
</feature>
<feature type="topological domain" description="Cytoplasmic" evidence="2">
    <location>
        <begin position="158"/>
        <end position="172"/>
    </location>
</feature>
<feature type="short sequence motif" description="Di-lysine motif" evidence="1">
    <location>
        <begin position="168"/>
        <end position="172"/>
    </location>
</feature>
<feature type="glycosylation site" description="N-linked (GlcNAc...) asparagine; by host" evidence="2">
    <location>
        <position position="36"/>
    </location>
</feature>
<feature type="glycosylation site" description="N-linked (GlcNAc...) asparagine; by host" evidence="2">
    <location>
        <position position="68"/>
    </location>
</feature>
<feature type="glycosylation site" description="N-linked (GlcNAc...) asparagine; by host" evidence="2">
    <location>
        <position position="72"/>
    </location>
</feature>
<feature type="glycosylation site" description="N-linked (GlcNAc...) asparagine; by host" evidence="2">
    <location>
        <position position="102"/>
    </location>
</feature>
<feature type="disulfide bond" evidence="1">
    <location>
        <begin position="37"/>
        <end position="55"/>
    </location>
</feature>
<feature type="disulfide bond" evidence="1">
    <location>
        <begin position="49"/>
        <end position="111"/>
    </location>
</feature>